<protein>
    <recommendedName>
        <fullName evidence="1">DNA topoisomerase 4 subunit A</fullName>
        <ecNumber evidence="1">5.6.2.2</ecNumber>
    </recommendedName>
    <alternativeName>
        <fullName evidence="1">Topoisomerase IV subunit A</fullName>
    </alternativeName>
</protein>
<keyword id="KW-0002">3D-structure</keyword>
<keyword id="KW-1003">Cell membrane</keyword>
<keyword id="KW-0238">DNA-binding</keyword>
<keyword id="KW-0413">Isomerase</keyword>
<keyword id="KW-0472">Membrane</keyword>
<keyword id="KW-0799">Topoisomerase</keyword>
<organism>
    <name type="scientific">Staphylococcus aureus (strain MSSA476)</name>
    <dbReference type="NCBI Taxonomy" id="282459"/>
    <lineage>
        <taxon>Bacteria</taxon>
        <taxon>Bacillati</taxon>
        <taxon>Bacillota</taxon>
        <taxon>Bacilli</taxon>
        <taxon>Bacillales</taxon>
        <taxon>Staphylococcaceae</taxon>
        <taxon>Staphylococcus</taxon>
    </lineage>
</organism>
<feature type="chain" id="PRO_0000145413" description="DNA topoisomerase 4 subunit A">
    <location>
        <begin position="1"/>
        <end position="800"/>
    </location>
</feature>
<feature type="domain" description="Topo IIA-type catalytic" evidence="2">
    <location>
        <begin position="31"/>
        <end position="495"/>
    </location>
</feature>
<feature type="active site" description="O-(5'-phospho-DNA)-tyrosine intermediate" evidence="1">
    <location>
        <position position="119"/>
    </location>
</feature>
<feature type="site" description="Interaction with DNA" evidence="1">
    <location>
        <position position="39"/>
    </location>
</feature>
<feature type="site" description="Interaction with DNA" evidence="1">
    <location>
        <position position="75"/>
    </location>
</feature>
<feature type="site" description="Interaction with DNA" evidence="1">
    <location>
        <position position="77"/>
    </location>
</feature>
<feature type="site" description="Interaction with DNA" evidence="1">
    <location>
        <position position="88"/>
    </location>
</feature>
<feature type="site" description="Interaction with DNA" evidence="1">
    <location>
        <position position="94"/>
    </location>
</feature>
<feature type="site" description="Transition state stabilizer" evidence="1">
    <location>
        <position position="118"/>
    </location>
</feature>
<feature type="turn" evidence="3">
    <location>
        <begin position="34"/>
        <end position="36"/>
    </location>
</feature>
<feature type="helix" evidence="3">
    <location>
        <begin position="40"/>
        <end position="52"/>
    </location>
</feature>
<feature type="strand" evidence="3">
    <location>
        <begin position="56"/>
        <end position="58"/>
    </location>
</feature>
<feature type="helix" evidence="3">
    <location>
        <begin position="63"/>
        <end position="73"/>
    </location>
</feature>
<feature type="helix" evidence="3">
    <location>
        <begin position="81"/>
        <end position="88"/>
    </location>
</feature>
<feature type="turn" evidence="3">
    <location>
        <begin position="92"/>
        <end position="94"/>
    </location>
</feature>
<feature type="strand" evidence="3">
    <location>
        <begin position="99"/>
        <end position="104"/>
    </location>
</feature>
<feature type="turn" evidence="3">
    <location>
        <begin position="117"/>
        <end position="119"/>
    </location>
</feature>
<feature type="strand" evidence="3">
    <location>
        <begin position="121"/>
        <end position="124"/>
    </location>
</feature>
<feature type="helix" evidence="3">
    <location>
        <begin position="128"/>
        <end position="131"/>
    </location>
</feature>
<feature type="turn" evidence="3">
    <location>
        <begin position="133"/>
        <end position="136"/>
    </location>
</feature>
<feature type="strand" evidence="3">
    <location>
        <begin position="142"/>
        <end position="144"/>
    </location>
</feature>
<feature type="strand" evidence="3">
    <location>
        <begin position="148"/>
        <end position="155"/>
    </location>
</feature>
<feature type="helix" evidence="3">
    <location>
        <begin position="162"/>
        <end position="166"/>
    </location>
</feature>
<feature type="helix" evidence="3">
    <location>
        <begin position="184"/>
        <end position="196"/>
    </location>
</feature>
<feature type="helix" evidence="3">
    <location>
        <begin position="202"/>
        <end position="205"/>
    </location>
</feature>
<feature type="turn" evidence="3">
    <location>
        <begin position="206"/>
        <end position="208"/>
    </location>
</feature>
<feature type="strand" evidence="3">
    <location>
        <begin position="219"/>
        <end position="221"/>
    </location>
</feature>
<feature type="helix" evidence="3">
    <location>
        <begin position="223"/>
        <end position="232"/>
    </location>
</feature>
<feature type="strand" evidence="3">
    <location>
        <begin position="233"/>
        <end position="240"/>
    </location>
</feature>
<feature type="strand" evidence="3">
    <location>
        <begin position="242"/>
        <end position="245"/>
    </location>
</feature>
<feature type="strand" evidence="3">
    <location>
        <begin position="254"/>
        <end position="259"/>
    </location>
</feature>
<feature type="helix" evidence="3">
    <location>
        <begin position="266"/>
        <end position="279"/>
    </location>
</feature>
<feature type="strand" evidence="3">
    <location>
        <begin position="288"/>
        <end position="290"/>
    </location>
</feature>
<feature type="strand" evidence="3">
    <location>
        <begin position="299"/>
        <end position="302"/>
    </location>
</feature>
<feature type="helix" evidence="3">
    <location>
        <begin position="311"/>
        <end position="316"/>
    </location>
</feature>
<feature type="strand" evidence="3">
    <location>
        <begin position="323"/>
        <end position="329"/>
    </location>
</feature>
<feature type="strand" evidence="3">
    <location>
        <begin position="331"/>
        <end position="334"/>
    </location>
</feature>
<feature type="strand" evidence="3">
    <location>
        <begin position="337"/>
        <end position="340"/>
    </location>
</feature>
<feature type="helix" evidence="3">
    <location>
        <begin position="343"/>
        <end position="384"/>
    </location>
</feature>
<feature type="helix" evidence="3">
    <location>
        <begin position="386"/>
        <end position="395"/>
    </location>
</feature>
<feature type="helix" evidence="3">
    <location>
        <begin position="399"/>
        <end position="407"/>
    </location>
</feature>
<feature type="helix" evidence="3">
    <location>
        <begin position="414"/>
        <end position="421"/>
    </location>
</feature>
<feature type="helix" evidence="3">
    <location>
        <begin position="425"/>
        <end position="428"/>
    </location>
</feature>
<feature type="helix" evidence="3">
    <location>
        <begin position="432"/>
        <end position="455"/>
    </location>
</feature>
<feature type="helix" evidence="3">
    <location>
        <begin position="457"/>
        <end position="475"/>
    </location>
</feature>
<feature type="strand" evidence="3">
    <location>
        <begin position="482"/>
        <end position="486"/>
    </location>
</feature>
<reference key="1">
    <citation type="journal article" date="2004" name="Proc. Natl. Acad. Sci. U.S.A.">
        <title>Complete genomes of two clinical Staphylococcus aureus strains: evidence for the rapid evolution of virulence and drug resistance.</title>
        <authorList>
            <person name="Holden M.T.G."/>
            <person name="Feil E.J."/>
            <person name="Lindsay J.A."/>
            <person name="Peacock S.J."/>
            <person name="Day N.P.J."/>
            <person name="Enright M.C."/>
            <person name="Foster T.J."/>
            <person name="Moore C.E."/>
            <person name="Hurst L."/>
            <person name="Atkin R."/>
            <person name="Barron A."/>
            <person name="Bason N."/>
            <person name="Bentley S.D."/>
            <person name="Chillingworth C."/>
            <person name="Chillingworth T."/>
            <person name="Churcher C."/>
            <person name="Clark L."/>
            <person name="Corton C."/>
            <person name="Cronin A."/>
            <person name="Doggett J."/>
            <person name="Dowd L."/>
            <person name="Feltwell T."/>
            <person name="Hance Z."/>
            <person name="Harris B."/>
            <person name="Hauser H."/>
            <person name="Holroyd S."/>
            <person name="Jagels K."/>
            <person name="James K.D."/>
            <person name="Lennard N."/>
            <person name="Line A."/>
            <person name="Mayes R."/>
            <person name="Moule S."/>
            <person name="Mungall K."/>
            <person name="Ormond D."/>
            <person name="Quail M.A."/>
            <person name="Rabbinowitsch E."/>
            <person name="Rutherford K.M."/>
            <person name="Sanders M."/>
            <person name="Sharp S."/>
            <person name="Simmonds M."/>
            <person name="Stevens K."/>
            <person name="Whitehead S."/>
            <person name="Barrell B.G."/>
            <person name="Spratt B.G."/>
            <person name="Parkhill J."/>
        </authorList>
    </citation>
    <scope>NUCLEOTIDE SEQUENCE [LARGE SCALE GENOMIC DNA]</scope>
    <source>
        <strain>MSSA476</strain>
    </source>
</reference>
<reference key="2">
    <citation type="submission" date="2011-07" db="PDB data bank">
        <title>Crystal structure of a 59 kDa fragment of topoisomerase IV subunit A (GrlA) from Staphylococcus aureus.</title>
        <authorList>
            <person name="Carr S.B."/>
            <person name="Makris G."/>
            <person name="Thomas C.D."/>
            <person name="Phillips S.E.V."/>
        </authorList>
    </citation>
    <scope>X-RAY CRYSTALLOGRAPHY (2.8 ANGSTROMS) OF 2-491</scope>
</reference>
<evidence type="ECO:0000255" key="1">
    <source>
        <dbReference type="HAMAP-Rule" id="MF_00937"/>
    </source>
</evidence>
<evidence type="ECO:0000255" key="2">
    <source>
        <dbReference type="PROSITE-ProRule" id="PRU01384"/>
    </source>
</evidence>
<evidence type="ECO:0007829" key="3">
    <source>
        <dbReference type="PDB" id="2INR"/>
    </source>
</evidence>
<name>PARC_STAAS</name>
<comment type="function">
    <text evidence="1">Topoisomerase IV is essential for chromosome segregation. It relaxes supercoiled DNA. Performs the decatenation events required during the replication of a circular DNA molecule.</text>
</comment>
<comment type="catalytic activity">
    <reaction evidence="1">
        <text>ATP-dependent breakage, passage and rejoining of double-stranded DNA.</text>
        <dbReference type="EC" id="5.6.2.2"/>
    </reaction>
</comment>
<comment type="subunit">
    <text evidence="1">Heterotetramer composed of ParC and ParE.</text>
</comment>
<comment type="subcellular location">
    <subcellularLocation>
        <location evidence="1">Cell membrane</location>
        <topology evidence="1">Peripheral membrane protein</topology>
    </subcellularLocation>
</comment>
<comment type="similarity">
    <text evidence="1">Belongs to the type II topoisomerase GyrA/ParC subunit family. ParC type 2 subfamily.</text>
</comment>
<dbReference type="EC" id="5.6.2.2" evidence="1"/>
<dbReference type="EMBL" id="BX571857">
    <property type="protein sequence ID" value="CAG43072.1"/>
    <property type="molecule type" value="Genomic_DNA"/>
</dbReference>
<dbReference type="RefSeq" id="WP_001289571.1">
    <property type="nucleotide sequence ID" value="NC_002953.3"/>
</dbReference>
<dbReference type="PDB" id="2INR">
    <property type="method" value="X-ray"/>
    <property type="resolution" value="2.80 A"/>
    <property type="chains" value="A=2-491"/>
</dbReference>
<dbReference type="PDBsum" id="2INR"/>
<dbReference type="SMR" id="Q6G9K4"/>
<dbReference type="KEGG" id="sas:SAS1295"/>
<dbReference type="HOGENOM" id="CLU_002977_6_1_9"/>
<dbReference type="BRENDA" id="5.6.2.2">
    <property type="organism ID" value="3352"/>
</dbReference>
<dbReference type="EvolutionaryTrace" id="Q6G9K4"/>
<dbReference type="GO" id="GO:0005694">
    <property type="term" value="C:chromosome"/>
    <property type="evidence" value="ECO:0007669"/>
    <property type="project" value="InterPro"/>
</dbReference>
<dbReference type="GO" id="GO:0005737">
    <property type="term" value="C:cytoplasm"/>
    <property type="evidence" value="ECO:0007669"/>
    <property type="project" value="TreeGrafter"/>
</dbReference>
<dbReference type="GO" id="GO:0009330">
    <property type="term" value="C:DNA topoisomerase type II (double strand cut, ATP-hydrolyzing) complex"/>
    <property type="evidence" value="ECO:0007669"/>
    <property type="project" value="TreeGrafter"/>
</dbReference>
<dbReference type="GO" id="GO:0019897">
    <property type="term" value="C:extrinsic component of plasma membrane"/>
    <property type="evidence" value="ECO:0007669"/>
    <property type="project" value="UniProtKB-UniRule"/>
</dbReference>
<dbReference type="GO" id="GO:0005524">
    <property type="term" value="F:ATP binding"/>
    <property type="evidence" value="ECO:0007669"/>
    <property type="project" value="InterPro"/>
</dbReference>
<dbReference type="GO" id="GO:0003677">
    <property type="term" value="F:DNA binding"/>
    <property type="evidence" value="ECO:0007669"/>
    <property type="project" value="UniProtKB-UniRule"/>
</dbReference>
<dbReference type="GO" id="GO:0034335">
    <property type="term" value="F:DNA negative supercoiling activity"/>
    <property type="evidence" value="ECO:0007669"/>
    <property type="project" value="UniProtKB-ARBA"/>
</dbReference>
<dbReference type="GO" id="GO:0007059">
    <property type="term" value="P:chromosome segregation"/>
    <property type="evidence" value="ECO:0007669"/>
    <property type="project" value="UniProtKB-UniRule"/>
</dbReference>
<dbReference type="GO" id="GO:0006265">
    <property type="term" value="P:DNA topological change"/>
    <property type="evidence" value="ECO:0007669"/>
    <property type="project" value="UniProtKB-UniRule"/>
</dbReference>
<dbReference type="CDD" id="cd00187">
    <property type="entry name" value="TOP4c"/>
    <property type="match status" value="1"/>
</dbReference>
<dbReference type="FunFam" id="1.10.268.10:FF:000001">
    <property type="entry name" value="DNA gyrase subunit A"/>
    <property type="match status" value="1"/>
</dbReference>
<dbReference type="FunFam" id="3.30.1360.40:FF:000002">
    <property type="entry name" value="DNA gyrase subunit A"/>
    <property type="match status" value="1"/>
</dbReference>
<dbReference type="FunFam" id="3.90.199.10:FF:000001">
    <property type="entry name" value="DNA gyrase subunit A"/>
    <property type="match status" value="1"/>
</dbReference>
<dbReference type="FunFam" id="2.120.10.90:FF:000005">
    <property type="entry name" value="DNA topoisomerase 4 subunit A"/>
    <property type="match status" value="1"/>
</dbReference>
<dbReference type="Gene3D" id="3.30.1360.40">
    <property type="match status" value="1"/>
</dbReference>
<dbReference type="Gene3D" id="2.120.10.90">
    <property type="entry name" value="DNA gyrase/topoisomerase IV, subunit A, C-terminal"/>
    <property type="match status" value="1"/>
</dbReference>
<dbReference type="Gene3D" id="3.90.199.10">
    <property type="entry name" value="Topoisomerase II, domain 5"/>
    <property type="match status" value="1"/>
</dbReference>
<dbReference type="Gene3D" id="1.10.268.10">
    <property type="entry name" value="Topoisomerase, domain 3"/>
    <property type="match status" value="1"/>
</dbReference>
<dbReference type="HAMAP" id="MF_00937">
    <property type="entry name" value="ParC_type2"/>
    <property type="match status" value="1"/>
</dbReference>
<dbReference type="InterPro" id="IPR006691">
    <property type="entry name" value="GyrA/parC_rep"/>
</dbReference>
<dbReference type="InterPro" id="IPR035516">
    <property type="entry name" value="Gyrase/topoIV_suA_C"/>
</dbReference>
<dbReference type="InterPro" id="IPR013760">
    <property type="entry name" value="Topo_IIA-like_dom_sf"/>
</dbReference>
<dbReference type="InterPro" id="IPR013758">
    <property type="entry name" value="Topo_IIA_A/C_ab"/>
</dbReference>
<dbReference type="InterPro" id="IPR013757">
    <property type="entry name" value="Topo_IIA_A_a_sf"/>
</dbReference>
<dbReference type="InterPro" id="IPR002205">
    <property type="entry name" value="Topo_IIA_dom_A"/>
</dbReference>
<dbReference type="InterPro" id="IPR005741">
    <property type="entry name" value="TopoIV_A_Gpos"/>
</dbReference>
<dbReference type="InterPro" id="IPR050220">
    <property type="entry name" value="Type_II_DNA_Topoisomerases"/>
</dbReference>
<dbReference type="NCBIfam" id="TIGR01061">
    <property type="entry name" value="parC_Gpos"/>
    <property type="match status" value="1"/>
</dbReference>
<dbReference type="NCBIfam" id="NF004044">
    <property type="entry name" value="PRK05561.1"/>
    <property type="match status" value="1"/>
</dbReference>
<dbReference type="PANTHER" id="PTHR43493">
    <property type="entry name" value="DNA GYRASE/TOPOISOMERASE SUBUNIT A"/>
    <property type="match status" value="1"/>
</dbReference>
<dbReference type="PANTHER" id="PTHR43493:SF9">
    <property type="entry name" value="DNA TOPOISOMERASE 4 SUBUNIT A"/>
    <property type="match status" value="1"/>
</dbReference>
<dbReference type="Pfam" id="PF03989">
    <property type="entry name" value="DNA_gyraseA_C"/>
    <property type="match status" value="5"/>
</dbReference>
<dbReference type="Pfam" id="PF00521">
    <property type="entry name" value="DNA_topoisoIV"/>
    <property type="match status" value="1"/>
</dbReference>
<dbReference type="SMART" id="SM00434">
    <property type="entry name" value="TOP4c"/>
    <property type="match status" value="1"/>
</dbReference>
<dbReference type="SUPFAM" id="SSF101904">
    <property type="entry name" value="GyrA/ParC C-terminal domain-like"/>
    <property type="match status" value="1"/>
</dbReference>
<dbReference type="SUPFAM" id="SSF56719">
    <property type="entry name" value="Type II DNA topoisomerase"/>
    <property type="match status" value="1"/>
</dbReference>
<dbReference type="PROSITE" id="PS52040">
    <property type="entry name" value="TOPO_IIA"/>
    <property type="match status" value="1"/>
</dbReference>
<sequence length="800" mass="90966">MSEIIQDLSLEDVLGDRFGRYSKYIIQERALPDVRDGLKPVQRRILYAMYSSGNTHDKNFRKSAKTVGDVIGQYHPHGDSSVYEAMVRLSQDWKLRHVLIEMHGNNGSIDNDPPAAMRYTEAKLSLLAEELLRDINKETVSFIPNYDDTTLEPMVLPSRFPNLLVNGSTGISAGYATDIPPHNLAEVIQATLKYIDNPDITVNQLMKYIKGPDFPTGGIIQGIDGIKKAYESGKGRIIVRSKVEEETLRNGRKQLIITEIPYEVNKSSLVKRIDELRADKKVDGIVEVRDETDRTGLRIAIELKKDVNSESIKNYLYKNSDLQISYNFNMVAISDGRPKLMGIRQIIDSYLNHQIEVVANRTKFELDNAEKRMHIVEGLIKALSILDKVIELIRSSKNKRDAKENLIEVYEFTEEQAEAIVMLQLYRLTNTDIVALEGEHKELEALIKQLRHILDNHDALLNVIKEELNEIKKKFKSERLSLIEAEIEEIKIDKEVMVPSEEVILSMTRHGYIKRTSIRSFNASGVEDIGLKDGDSLLKHQEVNTQDTVLVFTNKGRYLFIPVHKLADIRWKELGQHVSQIVPIEEDEVVINVFNEKDFNTDAFYVFATQNGMIKKSTVPLFKTTRFNKPLIATKVKENDDLISVMRFEKDQLITVITNKGMSLTYNTSELSDTGLRAAGVKSINLKAEDFVVVTEGVSENDTILMATQRGSLKRISFKILQVAKRAQRGITLLKELKKNPHRIVAAHVVTGEHSQYTLYSKSNEEHGLINDIHKSEQYTNGSFIVDTDDFGEVIDMYIS</sequence>
<gene>
    <name evidence="1" type="primary">parC</name>
    <name type="ordered locus">SAS1295</name>
</gene>
<accession>Q6G9K4</accession>
<proteinExistence type="evidence at protein level"/>